<dbReference type="EMBL" id="CP001173">
    <property type="protein sequence ID" value="ACI26916.1"/>
    <property type="molecule type" value="Genomic_DNA"/>
</dbReference>
<dbReference type="RefSeq" id="WP_000532115.1">
    <property type="nucleotide sequence ID" value="NC_011333.1"/>
</dbReference>
<dbReference type="SMR" id="B5Z9T6"/>
<dbReference type="KEGG" id="hpg:HPG27_148"/>
<dbReference type="HOGENOM" id="CLU_062974_2_2_7"/>
<dbReference type="Proteomes" id="UP000001735">
    <property type="component" value="Chromosome"/>
</dbReference>
<dbReference type="GO" id="GO:0005829">
    <property type="term" value="C:cytosol"/>
    <property type="evidence" value="ECO:0007669"/>
    <property type="project" value="TreeGrafter"/>
</dbReference>
<dbReference type="GO" id="GO:0003677">
    <property type="term" value="F:DNA binding"/>
    <property type="evidence" value="ECO:0007669"/>
    <property type="project" value="UniProtKB-UniRule"/>
</dbReference>
<dbReference type="GO" id="GO:0006355">
    <property type="term" value="P:regulation of DNA-templated transcription"/>
    <property type="evidence" value="ECO:0007669"/>
    <property type="project" value="UniProtKB-UniRule"/>
</dbReference>
<dbReference type="FunFam" id="1.10.10.200:FF:000008">
    <property type="entry name" value="Probable transcriptional regulatory protein HP_0162"/>
    <property type="match status" value="1"/>
</dbReference>
<dbReference type="Gene3D" id="1.10.10.200">
    <property type="match status" value="1"/>
</dbReference>
<dbReference type="Gene3D" id="3.30.70.980">
    <property type="match status" value="2"/>
</dbReference>
<dbReference type="HAMAP" id="MF_00693">
    <property type="entry name" value="Transcrip_reg_TACO1"/>
    <property type="match status" value="1"/>
</dbReference>
<dbReference type="InterPro" id="IPR017856">
    <property type="entry name" value="Integrase-like_N"/>
</dbReference>
<dbReference type="InterPro" id="IPR048300">
    <property type="entry name" value="TACO1_YebC-like_2nd/3rd_dom"/>
</dbReference>
<dbReference type="InterPro" id="IPR049083">
    <property type="entry name" value="TACO1_YebC_N"/>
</dbReference>
<dbReference type="InterPro" id="IPR002876">
    <property type="entry name" value="Transcrip_reg_TACO1-like"/>
</dbReference>
<dbReference type="InterPro" id="IPR026564">
    <property type="entry name" value="Transcrip_reg_TACO1-like_dom3"/>
</dbReference>
<dbReference type="InterPro" id="IPR029072">
    <property type="entry name" value="YebC-like"/>
</dbReference>
<dbReference type="NCBIfam" id="NF009044">
    <property type="entry name" value="PRK12378.1"/>
    <property type="match status" value="1"/>
</dbReference>
<dbReference type="NCBIfam" id="TIGR01033">
    <property type="entry name" value="YebC/PmpR family DNA-binding transcriptional regulator"/>
    <property type="match status" value="1"/>
</dbReference>
<dbReference type="PANTHER" id="PTHR12532:SF6">
    <property type="entry name" value="TRANSCRIPTIONAL REGULATORY PROTEIN YEBC-RELATED"/>
    <property type="match status" value="1"/>
</dbReference>
<dbReference type="PANTHER" id="PTHR12532">
    <property type="entry name" value="TRANSLATIONAL ACTIVATOR OF CYTOCHROME C OXIDASE 1"/>
    <property type="match status" value="1"/>
</dbReference>
<dbReference type="Pfam" id="PF20772">
    <property type="entry name" value="TACO1_YebC_N"/>
    <property type="match status" value="1"/>
</dbReference>
<dbReference type="Pfam" id="PF01709">
    <property type="entry name" value="Transcrip_reg"/>
    <property type="match status" value="1"/>
</dbReference>
<dbReference type="SUPFAM" id="SSF75625">
    <property type="entry name" value="YebC-like"/>
    <property type="match status" value="1"/>
</dbReference>
<gene>
    <name type="ordered locus">HPG27_148</name>
</gene>
<organism>
    <name type="scientific">Helicobacter pylori (strain G27)</name>
    <dbReference type="NCBI Taxonomy" id="563041"/>
    <lineage>
        <taxon>Bacteria</taxon>
        <taxon>Pseudomonadati</taxon>
        <taxon>Campylobacterota</taxon>
        <taxon>Epsilonproteobacteria</taxon>
        <taxon>Campylobacterales</taxon>
        <taxon>Helicobacteraceae</taxon>
        <taxon>Helicobacter</taxon>
    </lineage>
</organism>
<protein>
    <recommendedName>
        <fullName evidence="1">Probable transcriptional regulatory protein HPG27_148</fullName>
    </recommendedName>
</protein>
<name>Y148_HELPG</name>
<proteinExistence type="inferred from homology"/>
<sequence length="240" mass="27014">MGRAFEYRRAAKEKRWDKMSKVFPKLAKAITLAAKDGGSEPDTNAKLRTAILNAKAQNMPKDNIDAAIKRASSKEGNLSEITYEGKANFGVLIIMECMTDNPTRTIANLKSYFNKTQGASIVPNGSLEFMFNRKSVFECLKSEVENLKLSLEDLEFALIDYGLEELEEVGDKVIIRGDYNSFKLLNEGFESLKLPILKASLQRIATTPIELNDEQMELTEKLLDRIEDDDDVVALYTNIE</sequence>
<evidence type="ECO:0000255" key="1">
    <source>
        <dbReference type="HAMAP-Rule" id="MF_00693"/>
    </source>
</evidence>
<accession>B5Z9T6</accession>
<keyword id="KW-0963">Cytoplasm</keyword>
<keyword id="KW-0238">DNA-binding</keyword>
<keyword id="KW-1185">Reference proteome</keyword>
<keyword id="KW-0804">Transcription</keyword>
<keyword id="KW-0805">Transcription regulation</keyword>
<feature type="chain" id="PRO_1000132201" description="Probable transcriptional regulatory protein HPG27_148">
    <location>
        <begin position="1"/>
        <end position="240"/>
    </location>
</feature>
<comment type="subcellular location">
    <subcellularLocation>
        <location evidence="1">Cytoplasm</location>
    </subcellularLocation>
</comment>
<comment type="similarity">
    <text evidence="1">Belongs to the TACO1 family.</text>
</comment>
<reference key="1">
    <citation type="journal article" date="2009" name="J. Bacteriol.">
        <title>The complete genome sequence of Helicobacter pylori strain G27.</title>
        <authorList>
            <person name="Baltrus D.A."/>
            <person name="Amieva M.R."/>
            <person name="Covacci A."/>
            <person name="Lowe T.M."/>
            <person name="Merrell D.S."/>
            <person name="Ottemann K.M."/>
            <person name="Stein M."/>
            <person name="Salama N.R."/>
            <person name="Guillemin K."/>
        </authorList>
    </citation>
    <scope>NUCLEOTIDE SEQUENCE [LARGE SCALE GENOMIC DNA]</scope>
    <source>
        <strain>G27</strain>
    </source>
</reference>